<sequence>MPLRLDIKRKLTAMSDRVKSVDLHPTEPWMLASLYNGSVCVWNHETQTLVKTFEVCDLPVRAAKFVARKNWVVTGADDMQIRVFNYNTLERVHMFEAHSDYIRCIAVHPTQPFILTSSDDMLIKLWDWDKKWSCSQVFEGHTHYVMQIVINPKDNNQFASASLDRTIKVWQLGSSSPNFTLEGHEKGVNCIDYYSGGDKPYLISGADDRLVKIWDYQNKTCVQTPEGHAQNVSCATFHPELPIIITGSEDGTVRIWHSSTYRLESTLNYGMERVWCVASLRGSNNVALGYDEGSIIVKLGREEPAMSMDANGKIIWAKHSEVQQANLKAMGDTEIKDGERLPLAVKDMGSCEIYPQTIQHNPNGRFVVVCGDGEYIIYTAMALRNKSFGSAQEFAWAHDSSEYAIRESNSVVKIFKNFKEKKSFKPDFGAESIYGGFLLGVRSVNGLAFYDWENTELIRRIEIQPKHIFWSDSGELVCIATEESFFILKYLSEKVLAAQETHEGVTEDGIEDAFEVLGEIQEIVKTGLWVGDCFIYTSSVNRLNYYVGGEIVTIAHLDRTMYLLGYIPKDNRLYLGDKELNIVSYSLLVSVLEYQTAVMRRDFSMADKVLPTIPKEQRTRVAHFLEKQGFKQQALTVSTDPEHRFELALQLGELKIAYQLAVEAESEQKWKQLAELAISKCQFSLAQECLHHAQDYGGLLLLATASGNASMVNKLAEGAERDGKNNVAFMSYFLQGKLDACLELLIRTGRLPEAAFLARTYLPSQVSRVVKLWRENLSKVNQKAAESLADPTEYENLFPGLKEAFVVEEWVKETHADLWPAKQYPLVTPNEERNVMEEAKRFQPSRATAQQEPDGKPASSPVIMASQTTHKEEKSFQELEDDLDTMELEDIDTTDINLDEDILDD</sequence>
<dbReference type="EMBL" id="AF002705">
    <property type="protein sequence ID" value="AAB88018.1"/>
    <property type="molecule type" value="mRNA"/>
</dbReference>
<dbReference type="RefSeq" id="NP_068533.1">
    <property type="nucleotide sequence ID" value="NM_021765.1"/>
</dbReference>
<dbReference type="SMR" id="O35142"/>
<dbReference type="BioGRID" id="248811">
    <property type="interactions" value="4"/>
</dbReference>
<dbReference type="FunCoup" id="O35142">
    <property type="interactions" value="3351"/>
</dbReference>
<dbReference type="IntAct" id="O35142">
    <property type="interactions" value="3"/>
</dbReference>
<dbReference type="STRING" id="10116.ENSRNOP00000071536"/>
<dbReference type="iPTMnet" id="O35142"/>
<dbReference type="PhosphoSitePlus" id="O35142"/>
<dbReference type="jPOST" id="O35142"/>
<dbReference type="PaxDb" id="10116-ENSRNOP00000066994"/>
<dbReference type="GeneID" id="60384"/>
<dbReference type="KEGG" id="rno:60384"/>
<dbReference type="AGR" id="RGD:628746"/>
<dbReference type="CTD" id="9276"/>
<dbReference type="RGD" id="628746">
    <property type="gene designation" value="Copb2"/>
</dbReference>
<dbReference type="eggNOG" id="KOG0276">
    <property type="taxonomic scope" value="Eukaryota"/>
</dbReference>
<dbReference type="InParanoid" id="O35142"/>
<dbReference type="PhylomeDB" id="O35142"/>
<dbReference type="Reactome" id="R-RNO-6807878">
    <property type="pathway name" value="COPI-mediated anterograde transport"/>
</dbReference>
<dbReference type="Reactome" id="R-RNO-6811434">
    <property type="pathway name" value="COPI-dependent Golgi-to-ER retrograde traffic"/>
</dbReference>
<dbReference type="PRO" id="PR:O35142"/>
<dbReference type="Proteomes" id="UP000002494">
    <property type="component" value="Unplaced"/>
</dbReference>
<dbReference type="GO" id="GO:0030126">
    <property type="term" value="C:COPI vesicle coat"/>
    <property type="evidence" value="ECO:0000266"/>
    <property type="project" value="RGD"/>
</dbReference>
<dbReference type="GO" id="GO:0005829">
    <property type="term" value="C:cytosol"/>
    <property type="evidence" value="ECO:0007669"/>
    <property type="project" value="UniProtKB-SubCell"/>
</dbReference>
<dbReference type="GO" id="GO:0005794">
    <property type="term" value="C:Golgi apparatus"/>
    <property type="evidence" value="ECO:0000314"/>
    <property type="project" value="MGI"/>
</dbReference>
<dbReference type="GO" id="GO:0000139">
    <property type="term" value="C:Golgi membrane"/>
    <property type="evidence" value="ECO:0000314"/>
    <property type="project" value="RGD"/>
</dbReference>
<dbReference type="GO" id="GO:0005080">
    <property type="term" value="F:protein kinase C binding"/>
    <property type="evidence" value="ECO:0000353"/>
    <property type="project" value="RGD"/>
</dbReference>
<dbReference type="GO" id="GO:0005198">
    <property type="term" value="F:structural molecule activity"/>
    <property type="evidence" value="ECO:0007669"/>
    <property type="project" value="InterPro"/>
</dbReference>
<dbReference type="GO" id="GO:0006888">
    <property type="term" value="P:endoplasmic reticulum to Golgi vesicle-mediated transport"/>
    <property type="evidence" value="ECO:0000318"/>
    <property type="project" value="GO_Central"/>
</dbReference>
<dbReference type="GO" id="GO:0006891">
    <property type="term" value="P:intra-Golgi vesicle-mediated transport"/>
    <property type="evidence" value="ECO:0000266"/>
    <property type="project" value="RGD"/>
</dbReference>
<dbReference type="GO" id="GO:0006886">
    <property type="term" value="P:intracellular protein transport"/>
    <property type="evidence" value="ECO:0000318"/>
    <property type="project" value="GO_Central"/>
</dbReference>
<dbReference type="GO" id="GO:0006890">
    <property type="term" value="P:retrograde vesicle-mediated transport, Golgi to endoplasmic reticulum"/>
    <property type="evidence" value="ECO:0000250"/>
    <property type="project" value="UniProtKB"/>
</dbReference>
<dbReference type="CDD" id="cd22947">
    <property type="entry name" value="Coatomer_WDAD_beta-like"/>
    <property type="match status" value="1"/>
</dbReference>
<dbReference type="CDD" id="cd00200">
    <property type="entry name" value="WD40"/>
    <property type="match status" value="1"/>
</dbReference>
<dbReference type="FunFam" id="1.25.40.470:FF:000001">
    <property type="entry name" value="Coatomer subunit beta"/>
    <property type="match status" value="1"/>
</dbReference>
<dbReference type="FunFam" id="2.130.10.10:FF:000008">
    <property type="entry name" value="Coatomer subunit beta"/>
    <property type="match status" value="1"/>
</dbReference>
<dbReference type="Gene3D" id="1.25.40.470">
    <property type="match status" value="1"/>
</dbReference>
<dbReference type="Gene3D" id="2.130.10.10">
    <property type="entry name" value="YVTN repeat-like/Quinoprotein amine dehydrogenase"/>
    <property type="match status" value="1"/>
</dbReference>
<dbReference type="InterPro" id="IPR006692">
    <property type="entry name" value="Beta-prop_COPA/B_2nd"/>
</dbReference>
<dbReference type="InterPro" id="IPR050844">
    <property type="entry name" value="Coatomer_complex_subunit"/>
</dbReference>
<dbReference type="InterPro" id="IPR016453">
    <property type="entry name" value="COPB2"/>
</dbReference>
<dbReference type="InterPro" id="IPR020472">
    <property type="entry name" value="G-protein_beta_WD-40_rep"/>
</dbReference>
<dbReference type="InterPro" id="IPR056176">
    <property type="entry name" value="TPR_COPA_B"/>
</dbReference>
<dbReference type="InterPro" id="IPR015943">
    <property type="entry name" value="WD40/YVTN_repeat-like_dom_sf"/>
</dbReference>
<dbReference type="InterPro" id="IPR036322">
    <property type="entry name" value="WD40_repeat_dom_sf"/>
</dbReference>
<dbReference type="InterPro" id="IPR001680">
    <property type="entry name" value="WD40_rpt"/>
</dbReference>
<dbReference type="PANTHER" id="PTHR19876">
    <property type="entry name" value="COATOMER"/>
    <property type="match status" value="1"/>
</dbReference>
<dbReference type="PANTHER" id="PTHR19876:SF2">
    <property type="entry name" value="COATOMER SUBUNIT BETA"/>
    <property type="match status" value="1"/>
</dbReference>
<dbReference type="Pfam" id="PF04053">
    <property type="entry name" value="B-prop_COPA_B_2nd"/>
    <property type="match status" value="1"/>
</dbReference>
<dbReference type="Pfam" id="PF23953">
    <property type="entry name" value="TPR_COPA_B"/>
    <property type="match status" value="1"/>
</dbReference>
<dbReference type="Pfam" id="PF00400">
    <property type="entry name" value="WD40"/>
    <property type="match status" value="6"/>
</dbReference>
<dbReference type="PIRSF" id="PIRSF005567">
    <property type="entry name" value="Coatomer_beta'_subunit"/>
    <property type="match status" value="1"/>
</dbReference>
<dbReference type="PRINTS" id="PR00320">
    <property type="entry name" value="GPROTEINBRPT"/>
</dbReference>
<dbReference type="SMART" id="SM00320">
    <property type="entry name" value="WD40"/>
    <property type="match status" value="6"/>
</dbReference>
<dbReference type="SUPFAM" id="SSF50978">
    <property type="entry name" value="WD40 repeat-like"/>
    <property type="match status" value="2"/>
</dbReference>
<dbReference type="PROSITE" id="PS50082">
    <property type="entry name" value="WD_REPEATS_2"/>
    <property type="match status" value="5"/>
</dbReference>
<dbReference type="PROSITE" id="PS50294">
    <property type="entry name" value="WD_REPEATS_REGION"/>
    <property type="match status" value="1"/>
</dbReference>
<proteinExistence type="evidence at protein level"/>
<protein>
    <recommendedName>
        <fullName>Coatomer subunit beta'</fullName>
    </recommendedName>
    <alternativeName>
        <fullName>Beta'-coat protein</fullName>
        <shortName>Beta'-COP</shortName>
    </alternativeName>
    <alternativeName>
        <fullName>p102</fullName>
    </alternativeName>
</protein>
<evidence type="ECO:0000250" key="1"/>
<evidence type="ECO:0000250" key="2">
    <source>
        <dbReference type="UniProtKB" id="P35606"/>
    </source>
</evidence>
<evidence type="ECO:0000255" key="3"/>
<evidence type="ECO:0000256" key="4">
    <source>
        <dbReference type="SAM" id="MobiDB-lite"/>
    </source>
</evidence>
<evidence type="ECO:0000269" key="5">
    <source>
    </source>
</evidence>
<evidence type="ECO:0000269" key="6">
    <source>
    </source>
</evidence>
<evidence type="ECO:0000305" key="7"/>
<name>COPB2_RAT</name>
<organism>
    <name type="scientific">Rattus norvegicus</name>
    <name type="common">Rat</name>
    <dbReference type="NCBI Taxonomy" id="10116"/>
    <lineage>
        <taxon>Eukaryota</taxon>
        <taxon>Metazoa</taxon>
        <taxon>Chordata</taxon>
        <taxon>Craniata</taxon>
        <taxon>Vertebrata</taxon>
        <taxon>Euteleostomi</taxon>
        <taxon>Mammalia</taxon>
        <taxon>Eutheria</taxon>
        <taxon>Euarchontoglires</taxon>
        <taxon>Glires</taxon>
        <taxon>Rodentia</taxon>
        <taxon>Myomorpha</taxon>
        <taxon>Muroidea</taxon>
        <taxon>Muridae</taxon>
        <taxon>Murinae</taxon>
        <taxon>Rattus</taxon>
    </lineage>
</organism>
<accession>O35142</accession>
<reference key="1">
    <citation type="journal article" date="1997" name="J. Biol. Chem.">
        <title>The coatomer protein beta'-COP, a selective binding protein (RACK) for protein kinase Cepsilon.</title>
        <authorList>
            <person name="Csukai M."/>
            <person name="Chen C.-H."/>
            <person name="de Matteis M.A."/>
            <person name="Mochly-Rosen D."/>
        </authorList>
    </citation>
    <scope>NUCLEOTIDE SEQUENCE [MRNA]</scope>
    <source>
        <strain>Sprague-Dawley</strain>
        <tissue>Heart</tissue>
    </source>
</reference>
<reference key="2">
    <citation type="journal article" date="2007" name="Proc. Natl. Acad. Sci. U.S.A.">
        <title>Differential localization of coatomer complex isoforms within the Golgi apparatus.</title>
        <authorList>
            <person name="Moelleken J."/>
            <person name="Malsam J."/>
            <person name="Betts M.J."/>
            <person name="Movafeghi A."/>
            <person name="Reckmann I."/>
            <person name="Meissner I."/>
            <person name="Hellwig A."/>
            <person name="Russell R.B."/>
            <person name="Sollner T."/>
            <person name="Brugger B."/>
            <person name="Wieland F.T."/>
        </authorList>
    </citation>
    <scope>SUBCELLULAR LOCATION</scope>
</reference>
<reference key="3">
    <citation type="journal article" date="2008" name="J. Biol. Chem.">
        <title>Scyl1, mutated in a recessive form of spinocerebellar neurodegeneration, regulates COPI-mediated retrograde traffic.</title>
        <authorList>
            <person name="Burman J.L."/>
            <person name="Bourbonniere L."/>
            <person name="Philie J."/>
            <person name="Stroh T."/>
            <person name="Dejgaard S.Y."/>
            <person name="Presley J.F."/>
            <person name="McPherson P.S."/>
        </authorList>
    </citation>
    <scope>INTERACTION WITH SCYL1</scope>
</reference>
<reference key="4">
    <citation type="journal article" date="2012" name="Nat. Commun.">
        <title>Quantitative maps of protein phosphorylation sites across 14 different rat organs and tissues.</title>
        <authorList>
            <person name="Lundby A."/>
            <person name="Secher A."/>
            <person name="Lage K."/>
            <person name="Nordsborg N.B."/>
            <person name="Dmytriyev A."/>
            <person name="Lundby C."/>
            <person name="Olsen J.V."/>
        </authorList>
    </citation>
    <scope>IDENTIFICATION BY MASS SPECTROMETRY [LARGE SCALE ANALYSIS]</scope>
</reference>
<gene>
    <name type="primary">Copb2</name>
</gene>
<comment type="function">
    <text evidence="2">The coatomer is a cytosolic protein complex that binds to dilysine motifs and reversibly associates with Golgi non-clathrin-coated vesicles, which further mediate biosynthetic protein transport from the ER, via the Golgi up to the trans Golgi network. Coatomer complex is required for budding from Golgi membranes, and is essential for the retrograde Golgi-to-ER transport of dilysine-tagged proteins. In mammals, the coatomer can only be recruited by membranes associated to ADP-ribosylation factors (ARFs), which are small GTP-binding proteins; the complex also influences the Golgi structural integrity, as well as the processing, activity, and endocytic recycling of LDL receptors (By similarity).</text>
</comment>
<comment type="function">
    <text>This coatomer complex protein, essential for Golgi budding and vesicular trafficking, is a selective binding protein (RACK) for protein kinase C, epsilon type. It binds to Golgi membranes in a GTP-dependent manner.</text>
</comment>
<comment type="subunit">
    <text evidence="2 6">Oligomeric complex that consists of at least the alpha, beta, beta', gamma, delta, epsilon and zeta subunits. Probably interacts with PEX11A. Interacts with JAGN1 (By similarity). Interacts with SCYL1.</text>
</comment>
<comment type="subcellular location">
    <subcellularLocation>
        <location evidence="1">Cytoplasm</location>
        <location evidence="1">Cytosol</location>
    </subcellularLocation>
    <subcellularLocation>
        <location evidence="5">Golgi apparatus membrane</location>
        <topology evidence="5">Peripheral membrane protein</topology>
        <orientation evidence="5">Cytoplasmic side</orientation>
    </subcellularLocation>
    <subcellularLocation>
        <location evidence="1">Cytoplasmic vesicle</location>
        <location evidence="1">COPI-coated vesicle membrane</location>
        <topology evidence="1">Peripheral membrane protein</topology>
        <orientation evidence="1">Cytoplasmic side</orientation>
    </subcellularLocation>
    <text evidence="1">The coatomer is cytoplasmic or polymerized on the cytoplasmic side of the Golgi, as well as on the vesicles/buds originating from it (By similarity). Shows only a slight preference for the cis-Golgi apparatus (&lt;55%), compared with the trans-Golgi (&gt;45%).</text>
</comment>
<comment type="similarity">
    <text evidence="7">Belongs to the WD repeat COPB2 family.</text>
</comment>
<keyword id="KW-0007">Acetylation</keyword>
<keyword id="KW-0175">Coiled coil</keyword>
<keyword id="KW-0963">Cytoplasm</keyword>
<keyword id="KW-0968">Cytoplasmic vesicle</keyword>
<keyword id="KW-0931">ER-Golgi transport</keyword>
<keyword id="KW-0333">Golgi apparatus</keyword>
<keyword id="KW-0472">Membrane</keyword>
<keyword id="KW-0597">Phosphoprotein</keyword>
<keyword id="KW-0653">Protein transport</keyword>
<keyword id="KW-1185">Reference proteome</keyword>
<keyword id="KW-0677">Repeat</keyword>
<keyword id="KW-0813">Transport</keyword>
<keyword id="KW-0853">WD repeat</keyword>
<feature type="chain" id="PRO_0000050914" description="Coatomer subunit beta'">
    <location>
        <begin position="1"/>
        <end position="905"/>
    </location>
</feature>
<feature type="repeat" description="WD 1">
    <location>
        <begin position="13"/>
        <end position="52"/>
    </location>
</feature>
<feature type="repeat" description="WD 2">
    <location>
        <begin position="55"/>
        <end position="94"/>
    </location>
</feature>
<feature type="repeat" description="WD 3">
    <location>
        <begin position="97"/>
        <end position="136"/>
    </location>
</feature>
<feature type="repeat" description="WD 4">
    <location>
        <begin position="140"/>
        <end position="180"/>
    </location>
</feature>
<feature type="repeat" description="WD 5">
    <location>
        <begin position="183"/>
        <end position="224"/>
    </location>
</feature>
<feature type="repeat" description="WD 6">
    <location>
        <begin position="227"/>
        <end position="266"/>
    </location>
</feature>
<feature type="repeat" description="WD 7">
    <location>
        <begin position="350"/>
        <end position="388"/>
    </location>
</feature>
<feature type="repeat" description="WD 8">
    <location>
        <begin position="390"/>
        <end position="425"/>
    </location>
</feature>
<feature type="repeat" description="WD 9">
    <location>
        <begin position="746"/>
        <end position="783"/>
    </location>
</feature>
<feature type="region of interest" description="Disordered" evidence="4">
    <location>
        <begin position="837"/>
        <end position="905"/>
    </location>
</feature>
<feature type="coiled-coil region" evidence="3">
    <location>
        <begin position="867"/>
        <end position="891"/>
    </location>
</feature>
<feature type="compositionally biased region" description="Acidic residues" evidence="4">
    <location>
        <begin position="878"/>
        <end position="905"/>
    </location>
</feature>
<feature type="modified residue" description="N6-acetyllysine" evidence="2">
    <location>
        <position position="627"/>
    </location>
</feature>
<feature type="modified residue" description="Phosphoserine" evidence="2">
    <location>
        <position position="859"/>
    </location>
</feature>